<comment type="similarity">
    <text evidence="1">Belongs to the universal ribosomal protein uS9 family.</text>
</comment>
<reference key="1">
    <citation type="submission" date="2008-10" db="EMBL/GenBank/DDBJ databases">
        <title>The complete genome sequence of Helicobacter pylori strain P12.</title>
        <authorList>
            <person name="Fischer W."/>
            <person name="Windhager L."/>
            <person name="Karnholz A."/>
            <person name="Zeiller M."/>
            <person name="Zimmer R."/>
            <person name="Haas R."/>
        </authorList>
    </citation>
    <scope>NUCLEOTIDE SEQUENCE [LARGE SCALE GENOMIC DNA]</scope>
    <source>
        <strain>P12</strain>
    </source>
</reference>
<accession>B6JPI5</accession>
<name>RS9_HELP2</name>
<keyword id="KW-0687">Ribonucleoprotein</keyword>
<keyword id="KW-0689">Ribosomal protein</keyword>
<feature type="chain" id="PRO_1000128130" description="Small ribosomal subunit protein uS9">
    <location>
        <begin position="1"/>
        <end position="129"/>
    </location>
</feature>
<proteinExistence type="inferred from homology"/>
<gene>
    <name evidence="1" type="primary">rpsI</name>
    <name type="ordered locus">HPP12_0086</name>
</gene>
<sequence length="129" mass="14540">MRKIYATGKRKTAIAKVWLTPGKGELSINEQSLNQWLGGHEAIKMKVMQPLLLTKQEQSVDIKAMVFGGGYSAQAEALRHGISKALNAYDIAFRAILKPKGLLTRDSRVVERKKYGKRKARRSPQFSKR</sequence>
<protein>
    <recommendedName>
        <fullName evidence="1">Small ribosomal subunit protein uS9</fullName>
    </recommendedName>
    <alternativeName>
        <fullName evidence="2">30S ribosomal protein S9</fullName>
    </alternativeName>
</protein>
<dbReference type="EMBL" id="CP001217">
    <property type="protein sequence ID" value="ACJ07246.1"/>
    <property type="molecule type" value="Genomic_DNA"/>
</dbReference>
<dbReference type="SMR" id="B6JPI5"/>
<dbReference type="KEGG" id="hpp:HPP12_0086"/>
<dbReference type="HOGENOM" id="CLU_046483_2_1_7"/>
<dbReference type="Proteomes" id="UP000008198">
    <property type="component" value="Chromosome"/>
</dbReference>
<dbReference type="GO" id="GO:0022627">
    <property type="term" value="C:cytosolic small ribosomal subunit"/>
    <property type="evidence" value="ECO:0007669"/>
    <property type="project" value="TreeGrafter"/>
</dbReference>
<dbReference type="GO" id="GO:0003723">
    <property type="term" value="F:RNA binding"/>
    <property type="evidence" value="ECO:0007669"/>
    <property type="project" value="TreeGrafter"/>
</dbReference>
<dbReference type="GO" id="GO:0003735">
    <property type="term" value="F:structural constituent of ribosome"/>
    <property type="evidence" value="ECO:0007669"/>
    <property type="project" value="InterPro"/>
</dbReference>
<dbReference type="GO" id="GO:0006412">
    <property type="term" value="P:translation"/>
    <property type="evidence" value="ECO:0007669"/>
    <property type="project" value="UniProtKB-UniRule"/>
</dbReference>
<dbReference type="FunFam" id="3.30.230.10:FF:000025">
    <property type="entry name" value="30S ribosomal protein S9"/>
    <property type="match status" value="1"/>
</dbReference>
<dbReference type="Gene3D" id="3.30.230.10">
    <property type="match status" value="1"/>
</dbReference>
<dbReference type="HAMAP" id="MF_00532_B">
    <property type="entry name" value="Ribosomal_uS9_B"/>
    <property type="match status" value="1"/>
</dbReference>
<dbReference type="InterPro" id="IPR020568">
    <property type="entry name" value="Ribosomal_Su5_D2-typ_SF"/>
</dbReference>
<dbReference type="InterPro" id="IPR000754">
    <property type="entry name" value="Ribosomal_uS9"/>
</dbReference>
<dbReference type="InterPro" id="IPR023035">
    <property type="entry name" value="Ribosomal_uS9_bac/plastid"/>
</dbReference>
<dbReference type="InterPro" id="IPR020574">
    <property type="entry name" value="Ribosomal_uS9_CS"/>
</dbReference>
<dbReference type="InterPro" id="IPR014721">
    <property type="entry name" value="Ribsml_uS5_D2-typ_fold_subgr"/>
</dbReference>
<dbReference type="NCBIfam" id="NF001099">
    <property type="entry name" value="PRK00132.1"/>
    <property type="match status" value="1"/>
</dbReference>
<dbReference type="PANTHER" id="PTHR21569">
    <property type="entry name" value="RIBOSOMAL PROTEIN S9"/>
    <property type="match status" value="1"/>
</dbReference>
<dbReference type="PANTHER" id="PTHR21569:SF1">
    <property type="entry name" value="SMALL RIBOSOMAL SUBUNIT PROTEIN US9M"/>
    <property type="match status" value="1"/>
</dbReference>
<dbReference type="Pfam" id="PF00380">
    <property type="entry name" value="Ribosomal_S9"/>
    <property type="match status" value="1"/>
</dbReference>
<dbReference type="SUPFAM" id="SSF54211">
    <property type="entry name" value="Ribosomal protein S5 domain 2-like"/>
    <property type="match status" value="1"/>
</dbReference>
<dbReference type="PROSITE" id="PS00360">
    <property type="entry name" value="RIBOSOMAL_S9"/>
    <property type="match status" value="1"/>
</dbReference>
<organism>
    <name type="scientific">Helicobacter pylori (strain P12)</name>
    <dbReference type="NCBI Taxonomy" id="570508"/>
    <lineage>
        <taxon>Bacteria</taxon>
        <taxon>Pseudomonadati</taxon>
        <taxon>Campylobacterota</taxon>
        <taxon>Epsilonproteobacteria</taxon>
        <taxon>Campylobacterales</taxon>
        <taxon>Helicobacteraceae</taxon>
        <taxon>Helicobacter</taxon>
    </lineage>
</organism>
<evidence type="ECO:0000255" key="1">
    <source>
        <dbReference type="HAMAP-Rule" id="MF_00532"/>
    </source>
</evidence>
<evidence type="ECO:0000305" key="2"/>